<organism>
    <name type="scientific">Clostridioides difficile (strain 630)</name>
    <name type="common">Peptoclostridium difficile</name>
    <dbReference type="NCBI Taxonomy" id="272563"/>
    <lineage>
        <taxon>Bacteria</taxon>
        <taxon>Bacillati</taxon>
        <taxon>Bacillota</taxon>
        <taxon>Clostridia</taxon>
        <taxon>Peptostreptococcales</taxon>
        <taxon>Peptostreptococcaceae</taxon>
        <taxon>Clostridioides</taxon>
    </lineage>
</organism>
<evidence type="ECO:0000255" key="1">
    <source>
        <dbReference type="HAMAP-Rule" id="MF_00145"/>
    </source>
</evidence>
<sequence>MSMLNKKTIEDIDVCGKKVLVRCDFNVPLQDGVITDENRLNGALPTIQYLISKGAKVILCSHLGKPKGEAKPELSLAPVAKRLSEMLGKEVVFAADDNVVGENAKKATEKMENGDVVLLENTRYRKEETKNEENFSKELASLAEIFVNDAFGTAHRAHCSTVGAGEFLQERVCGYLIQKELKFLGEAVANPVRPFTAILGGAKVSDKLAVINELLEKVDNLIIGGGMAYTFLKAQGYEVGTSLLEIDKVEYAKEMMEKAKNKGVNLLLPVDVVMADHFAPDATPIVTEDANVKEDYMGLDMGPKTIANFVKTIKESKTVVWNGPMGVFEFENFANGTLSVARAMAELTDATTVIGGGDSAAAVNQLGFGDKMTHVSTGGGASLEFLEGKELPGIAALDNK</sequence>
<gene>
    <name evidence="1" type="primary">pgk</name>
    <name type="ordered locus">CD630_31730</name>
</gene>
<reference key="1">
    <citation type="journal article" date="2006" name="Nat. Genet.">
        <title>The multidrug-resistant human pathogen Clostridium difficile has a highly mobile, mosaic genome.</title>
        <authorList>
            <person name="Sebaihia M."/>
            <person name="Wren B.W."/>
            <person name="Mullany P."/>
            <person name="Fairweather N.F."/>
            <person name="Minton N."/>
            <person name="Stabler R."/>
            <person name="Thomson N.R."/>
            <person name="Roberts A.P."/>
            <person name="Cerdeno-Tarraga A.M."/>
            <person name="Wang H."/>
            <person name="Holden M.T.G."/>
            <person name="Wright A."/>
            <person name="Churcher C."/>
            <person name="Quail M.A."/>
            <person name="Baker S."/>
            <person name="Bason N."/>
            <person name="Brooks K."/>
            <person name="Chillingworth T."/>
            <person name="Cronin A."/>
            <person name="Davis P."/>
            <person name="Dowd L."/>
            <person name="Fraser A."/>
            <person name="Feltwell T."/>
            <person name="Hance Z."/>
            <person name="Holroyd S."/>
            <person name="Jagels K."/>
            <person name="Moule S."/>
            <person name="Mungall K."/>
            <person name="Price C."/>
            <person name="Rabbinowitsch E."/>
            <person name="Sharp S."/>
            <person name="Simmonds M."/>
            <person name="Stevens K."/>
            <person name="Unwin L."/>
            <person name="Whithead S."/>
            <person name="Dupuy B."/>
            <person name="Dougan G."/>
            <person name="Barrell B."/>
            <person name="Parkhill J."/>
        </authorList>
    </citation>
    <scope>NUCLEOTIDE SEQUENCE [LARGE SCALE GENOMIC DNA]</scope>
    <source>
        <strain>630</strain>
    </source>
</reference>
<proteinExistence type="inferred from homology"/>
<feature type="chain" id="PRO_1000192818" description="Phosphoglycerate kinase">
    <location>
        <begin position="1"/>
        <end position="400"/>
    </location>
</feature>
<feature type="binding site" evidence="1">
    <location>
        <begin position="24"/>
        <end position="26"/>
    </location>
    <ligand>
        <name>substrate</name>
    </ligand>
</feature>
<feature type="binding site" evidence="1">
    <location>
        <position position="39"/>
    </location>
    <ligand>
        <name>substrate</name>
    </ligand>
</feature>
<feature type="binding site" evidence="1">
    <location>
        <begin position="62"/>
        <end position="65"/>
    </location>
    <ligand>
        <name>substrate</name>
    </ligand>
</feature>
<feature type="binding site" evidence="1">
    <location>
        <position position="123"/>
    </location>
    <ligand>
        <name>substrate</name>
    </ligand>
</feature>
<feature type="binding site" evidence="1">
    <location>
        <position position="156"/>
    </location>
    <ligand>
        <name>substrate</name>
    </ligand>
</feature>
<feature type="binding site" evidence="1">
    <location>
        <position position="207"/>
    </location>
    <ligand>
        <name>ATP</name>
        <dbReference type="ChEBI" id="CHEBI:30616"/>
    </ligand>
</feature>
<feature type="binding site" evidence="1">
    <location>
        <position position="298"/>
    </location>
    <ligand>
        <name>ATP</name>
        <dbReference type="ChEBI" id="CHEBI:30616"/>
    </ligand>
</feature>
<feature type="binding site" evidence="1">
    <location>
        <position position="329"/>
    </location>
    <ligand>
        <name>ATP</name>
        <dbReference type="ChEBI" id="CHEBI:30616"/>
    </ligand>
</feature>
<feature type="binding site" evidence="1">
    <location>
        <begin position="356"/>
        <end position="359"/>
    </location>
    <ligand>
        <name>ATP</name>
        <dbReference type="ChEBI" id="CHEBI:30616"/>
    </ligand>
</feature>
<name>PGK_CLOD6</name>
<accession>Q181T8</accession>
<protein>
    <recommendedName>
        <fullName evidence="1">Phosphoglycerate kinase</fullName>
        <ecNumber evidence="1">2.7.2.3</ecNumber>
    </recommendedName>
</protein>
<keyword id="KW-0067">ATP-binding</keyword>
<keyword id="KW-0963">Cytoplasm</keyword>
<keyword id="KW-0324">Glycolysis</keyword>
<keyword id="KW-0418">Kinase</keyword>
<keyword id="KW-0547">Nucleotide-binding</keyword>
<keyword id="KW-1185">Reference proteome</keyword>
<keyword id="KW-0808">Transferase</keyword>
<comment type="catalytic activity">
    <reaction evidence="1">
        <text>(2R)-3-phosphoglycerate + ATP = (2R)-3-phospho-glyceroyl phosphate + ADP</text>
        <dbReference type="Rhea" id="RHEA:14801"/>
        <dbReference type="ChEBI" id="CHEBI:30616"/>
        <dbReference type="ChEBI" id="CHEBI:57604"/>
        <dbReference type="ChEBI" id="CHEBI:58272"/>
        <dbReference type="ChEBI" id="CHEBI:456216"/>
        <dbReference type="EC" id="2.7.2.3"/>
    </reaction>
</comment>
<comment type="pathway">
    <text evidence="1">Carbohydrate degradation; glycolysis; pyruvate from D-glyceraldehyde 3-phosphate: step 2/5.</text>
</comment>
<comment type="subunit">
    <text evidence="1">Monomer.</text>
</comment>
<comment type="subcellular location">
    <subcellularLocation>
        <location evidence="1">Cytoplasm</location>
    </subcellularLocation>
</comment>
<comment type="similarity">
    <text evidence="1">Belongs to the phosphoglycerate kinase family.</text>
</comment>
<dbReference type="EC" id="2.7.2.3" evidence="1"/>
<dbReference type="EMBL" id="AM180355">
    <property type="protein sequence ID" value="CAJ70070.1"/>
    <property type="molecule type" value="Genomic_DNA"/>
</dbReference>
<dbReference type="RefSeq" id="YP_001089690.1">
    <property type="nucleotide sequence ID" value="NC_009089.1"/>
</dbReference>
<dbReference type="SMR" id="Q181T8"/>
<dbReference type="STRING" id="272563.CD630_31730"/>
<dbReference type="EnsemblBacteria" id="CAJ70070">
    <property type="protein sequence ID" value="CAJ70070"/>
    <property type="gene ID" value="CD630_31730"/>
</dbReference>
<dbReference type="KEGG" id="cdf:CD630_31730"/>
<dbReference type="KEGG" id="pdc:CDIF630_03465"/>
<dbReference type="PATRIC" id="fig|272563.120.peg.3348"/>
<dbReference type="eggNOG" id="COG0126">
    <property type="taxonomic scope" value="Bacteria"/>
</dbReference>
<dbReference type="OrthoDB" id="9808460at2"/>
<dbReference type="PhylomeDB" id="Q181T8"/>
<dbReference type="BioCyc" id="PDIF272563:G12WB-3339-MONOMER"/>
<dbReference type="UniPathway" id="UPA00109">
    <property type="reaction ID" value="UER00185"/>
</dbReference>
<dbReference type="Proteomes" id="UP000001978">
    <property type="component" value="Chromosome"/>
</dbReference>
<dbReference type="GO" id="GO:0005829">
    <property type="term" value="C:cytosol"/>
    <property type="evidence" value="ECO:0007669"/>
    <property type="project" value="TreeGrafter"/>
</dbReference>
<dbReference type="GO" id="GO:0043531">
    <property type="term" value="F:ADP binding"/>
    <property type="evidence" value="ECO:0007669"/>
    <property type="project" value="TreeGrafter"/>
</dbReference>
<dbReference type="GO" id="GO:0005524">
    <property type="term" value="F:ATP binding"/>
    <property type="evidence" value="ECO:0007669"/>
    <property type="project" value="UniProtKB-KW"/>
</dbReference>
<dbReference type="GO" id="GO:0004618">
    <property type="term" value="F:phosphoglycerate kinase activity"/>
    <property type="evidence" value="ECO:0007669"/>
    <property type="project" value="UniProtKB-UniRule"/>
</dbReference>
<dbReference type="GO" id="GO:0006094">
    <property type="term" value="P:gluconeogenesis"/>
    <property type="evidence" value="ECO:0007669"/>
    <property type="project" value="TreeGrafter"/>
</dbReference>
<dbReference type="GO" id="GO:0006096">
    <property type="term" value="P:glycolytic process"/>
    <property type="evidence" value="ECO:0007669"/>
    <property type="project" value="UniProtKB-UniRule"/>
</dbReference>
<dbReference type="CDD" id="cd00318">
    <property type="entry name" value="Phosphoglycerate_kinase"/>
    <property type="match status" value="1"/>
</dbReference>
<dbReference type="FunFam" id="3.40.50.1260:FF:000003">
    <property type="entry name" value="Phosphoglycerate kinase"/>
    <property type="match status" value="1"/>
</dbReference>
<dbReference type="FunFam" id="3.40.50.1260:FF:000006">
    <property type="entry name" value="Phosphoglycerate kinase"/>
    <property type="match status" value="1"/>
</dbReference>
<dbReference type="Gene3D" id="3.40.50.1260">
    <property type="entry name" value="Phosphoglycerate kinase, N-terminal domain"/>
    <property type="match status" value="2"/>
</dbReference>
<dbReference type="HAMAP" id="MF_00145">
    <property type="entry name" value="Phosphoglyc_kinase"/>
    <property type="match status" value="1"/>
</dbReference>
<dbReference type="InterPro" id="IPR001576">
    <property type="entry name" value="Phosphoglycerate_kinase"/>
</dbReference>
<dbReference type="InterPro" id="IPR015911">
    <property type="entry name" value="Phosphoglycerate_kinase_CS"/>
</dbReference>
<dbReference type="InterPro" id="IPR015824">
    <property type="entry name" value="Phosphoglycerate_kinase_N"/>
</dbReference>
<dbReference type="InterPro" id="IPR036043">
    <property type="entry name" value="Phosphoglycerate_kinase_sf"/>
</dbReference>
<dbReference type="PANTHER" id="PTHR11406">
    <property type="entry name" value="PHOSPHOGLYCERATE KINASE"/>
    <property type="match status" value="1"/>
</dbReference>
<dbReference type="PANTHER" id="PTHR11406:SF23">
    <property type="entry name" value="PHOSPHOGLYCERATE KINASE 1, CHLOROPLASTIC-RELATED"/>
    <property type="match status" value="1"/>
</dbReference>
<dbReference type="Pfam" id="PF00162">
    <property type="entry name" value="PGK"/>
    <property type="match status" value="1"/>
</dbReference>
<dbReference type="PIRSF" id="PIRSF000724">
    <property type="entry name" value="Pgk"/>
    <property type="match status" value="1"/>
</dbReference>
<dbReference type="PRINTS" id="PR00477">
    <property type="entry name" value="PHGLYCKINASE"/>
</dbReference>
<dbReference type="SUPFAM" id="SSF53748">
    <property type="entry name" value="Phosphoglycerate kinase"/>
    <property type="match status" value="1"/>
</dbReference>
<dbReference type="PROSITE" id="PS00111">
    <property type="entry name" value="PGLYCERATE_KINASE"/>
    <property type="match status" value="1"/>
</dbReference>